<sequence length="394" mass="42421">MPSRNILVINCGSSSIKFALVNEAHSLFPLHGLAERLGSRDAVLRWKRGGDSDSLMIPNADHRAALAQLLPMVQNAAGGKLHGIGHRVVHGGELFTHATRIDDRVVEAIRATAPLAPLHNPANLQGIEAAMTLFPKLPHVAVFDTAFHQSLPEHAYRYALPEALYREHGVRRYGFHGTSHRYVSHRAAEMAGLAVGDSSWLSAHLGNGSSTCAIVNGQSLDTSMGLTPLEGLVMGTRSGDVDPNLHSHLARTLGWSLERIDSMLNNESGLLGLSDLSNDMRTLEQEREQGHPGAALAIEVFCYRLAKSLAAMSCALPQLDGVIFTGGIGENSPLVRAKTAAHLRLFDLRLDQEANARCVRGVAGPIQAAGHPRVLVIPTNEERQIALDTLALLD</sequence>
<gene>
    <name evidence="1" type="primary">ackA</name>
    <name type="ordered locus">PLES_44821</name>
</gene>
<organism>
    <name type="scientific">Pseudomonas aeruginosa (strain LESB58)</name>
    <dbReference type="NCBI Taxonomy" id="557722"/>
    <lineage>
        <taxon>Bacteria</taxon>
        <taxon>Pseudomonadati</taxon>
        <taxon>Pseudomonadota</taxon>
        <taxon>Gammaproteobacteria</taxon>
        <taxon>Pseudomonadales</taxon>
        <taxon>Pseudomonadaceae</taxon>
        <taxon>Pseudomonas</taxon>
    </lineage>
</organism>
<reference key="1">
    <citation type="journal article" date="2009" name="Genome Res.">
        <title>Newly introduced genomic prophage islands are critical determinants of in vivo competitiveness in the Liverpool epidemic strain of Pseudomonas aeruginosa.</title>
        <authorList>
            <person name="Winstanley C."/>
            <person name="Langille M.G.I."/>
            <person name="Fothergill J.L."/>
            <person name="Kukavica-Ibrulj I."/>
            <person name="Paradis-Bleau C."/>
            <person name="Sanschagrin F."/>
            <person name="Thomson N.R."/>
            <person name="Winsor G.L."/>
            <person name="Quail M.A."/>
            <person name="Lennard N."/>
            <person name="Bignell A."/>
            <person name="Clarke L."/>
            <person name="Seeger K."/>
            <person name="Saunders D."/>
            <person name="Harris D."/>
            <person name="Parkhill J."/>
            <person name="Hancock R.E.W."/>
            <person name="Brinkman F.S.L."/>
            <person name="Levesque R.C."/>
        </authorList>
    </citation>
    <scope>NUCLEOTIDE SEQUENCE [LARGE SCALE GENOMIC DNA]</scope>
    <source>
        <strain>LESB58</strain>
    </source>
</reference>
<dbReference type="EC" id="2.7.2.1" evidence="1"/>
<dbReference type="EMBL" id="FM209186">
    <property type="protein sequence ID" value="CAW29237.1"/>
    <property type="molecule type" value="Genomic_DNA"/>
</dbReference>
<dbReference type="RefSeq" id="WP_003085814.1">
    <property type="nucleotide sequence ID" value="NC_011770.1"/>
</dbReference>
<dbReference type="SMR" id="B7UYA0"/>
<dbReference type="KEGG" id="pag:PLES_44821"/>
<dbReference type="HOGENOM" id="CLU_020352_0_1_6"/>
<dbReference type="UniPathway" id="UPA00340">
    <property type="reaction ID" value="UER00458"/>
</dbReference>
<dbReference type="GO" id="GO:0005829">
    <property type="term" value="C:cytosol"/>
    <property type="evidence" value="ECO:0007669"/>
    <property type="project" value="TreeGrafter"/>
</dbReference>
<dbReference type="GO" id="GO:0008776">
    <property type="term" value="F:acetate kinase activity"/>
    <property type="evidence" value="ECO:0007669"/>
    <property type="project" value="UniProtKB-UniRule"/>
</dbReference>
<dbReference type="GO" id="GO:0005524">
    <property type="term" value="F:ATP binding"/>
    <property type="evidence" value="ECO:0007669"/>
    <property type="project" value="UniProtKB-KW"/>
</dbReference>
<dbReference type="GO" id="GO:0000287">
    <property type="term" value="F:magnesium ion binding"/>
    <property type="evidence" value="ECO:0007669"/>
    <property type="project" value="UniProtKB-UniRule"/>
</dbReference>
<dbReference type="GO" id="GO:0006083">
    <property type="term" value="P:acetate metabolic process"/>
    <property type="evidence" value="ECO:0007669"/>
    <property type="project" value="TreeGrafter"/>
</dbReference>
<dbReference type="GO" id="GO:0006085">
    <property type="term" value="P:acetyl-CoA biosynthetic process"/>
    <property type="evidence" value="ECO:0007669"/>
    <property type="project" value="UniProtKB-UniRule"/>
</dbReference>
<dbReference type="CDD" id="cd24010">
    <property type="entry name" value="ASKHA_NBD_AcK_PK"/>
    <property type="match status" value="1"/>
</dbReference>
<dbReference type="Gene3D" id="3.30.420.40">
    <property type="match status" value="2"/>
</dbReference>
<dbReference type="HAMAP" id="MF_00020">
    <property type="entry name" value="Acetate_kinase"/>
    <property type="match status" value="1"/>
</dbReference>
<dbReference type="InterPro" id="IPR004372">
    <property type="entry name" value="Ac/propionate_kinase"/>
</dbReference>
<dbReference type="InterPro" id="IPR000890">
    <property type="entry name" value="Aliphatic_acid_kin_short-chain"/>
</dbReference>
<dbReference type="InterPro" id="IPR023865">
    <property type="entry name" value="Aliphatic_acid_kinase_CS"/>
</dbReference>
<dbReference type="InterPro" id="IPR043129">
    <property type="entry name" value="ATPase_NBD"/>
</dbReference>
<dbReference type="NCBIfam" id="TIGR00016">
    <property type="entry name" value="ackA"/>
    <property type="match status" value="1"/>
</dbReference>
<dbReference type="PANTHER" id="PTHR21060">
    <property type="entry name" value="ACETATE KINASE"/>
    <property type="match status" value="1"/>
</dbReference>
<dbReference type="PANTHER" id="PTHR21060:SF21">
    <property type="entry name" value="ACETATE KINASE"/>
    <property type="match status" value="1"/>
</dbReference>
<dbReference type="Pfam" id="PF00871">
    <property type="entry name" value="Acetate_kinase"/>
    <property type="match status" value="1"/>
</dbReference>
<dbReference type="PIRSF" id="PIRSF000722">
    <property type="entry name" value="Acetate_prop_kin"/>
    <property type="match status" value="1"/>
</dbReference>
<dbReference type="PRINTS" id="PR00471">
    <property type="entry name" value="ACETATEKNASE"/>
</dbReference>
<dbReference type="SUPFAM" id="SSF53067">
    <property type="entry name" value="Actin-like ATPase domain"/>
    <property type="match status" value="2"/>
</dbReference>
<dbReference type="PROSITE" id="PS01075">
    <property type="entry name" value="ACETATE_KINASE_1"/>
    <property type="match status" value="1"/>
</dbReference>
<proteinExistence type="inferred from homology"/>
<accession>B7UYA0</accession>
<comment type="function">
    <text evidence="1">Catalyzes the formation of acetyl phosphate from acetate and ATP. Can also catalyze the reverse reaction.</text>
</comment>
<comment type="catalytic activity">
    <reaction evidence="1">
        <text>acetate + ATP = acetyl phosphate + ADP</text>
        <dbReference type="Rhea" id="RHEA:11352"/>
        <dbReference type="ChEBI" id="CHEBI:22191"/>
        <dbReference type="ChEBI" id="CHEBI:30089"/>
        <dbReference type="ChEBI" id="CHEBI:30616"/>
        <dbReference type="ChEBI" id="CHEBI:456216"/>
        <dbReference type="EC" id="2.7.2.1"/>
    </reaction>
</comment>
<comment type="cofactor">
    <cofactor evidence="1">
        <name>Mg(2+)</name>
        <dbReference type="ChEBI" id="CHEBI:18420"/>
    </cofactor>
    <cofactor evidence="1">
        <name>Mn(2+)</name>
        <dbReference type="ChEBI" id="CHEBI:29035"/>
    </cofactor>
    <text evidence="1">Mg(2+). Can also accept Mn(2+).</text>
</comment>
<comment type="pathway">
    <text evidence="1">Metabolic intermediate biosynthesis; acetyl-CoA biosynthesis; acetyl-CoA from acetate: step 1/2.</text>
</comment>
<comment type="subunit">
    <text evidence="1">Homodimer.</text>
</comment>
<comment type="subcellular location">
    <subcellularLocation>
        <location evidence="1">Cytoplasm</location>
    </subcellularLocation>
</comment>
<comment type="similarity">
    <text evidence="1">Belongs to the acetokinase family.</text>
</comment>
<keyword id="KW-0067">ATP-binding</keyword>
<keyword id="KW-0963">Cytoplasm</keyword>
<keyword id="KW-0418">Kinase</keyword>
<keyword id="KW-0460">Magnesium</keyword>
<keyword id="KW-0479">Metal-binding</keyword>
<keyword id="KW-0547">Nucleotide-binding</keyword>
<keyword id="KW-0808">Transferase</keyword>
<feature type="chain" id="PRO_1000116392" description="Acetate kinase">
    <location>
        <begin position="1"/>
        <end position="394"/>
    </location>
</feature>
<feature type="active site" description="Proton donor/acceptor" evidence="1">
    <location>
        <position position="144"/>
    </location>
</feature>
<feature type="binding site" evidence="1">
    <location>
        <position position="10"/>
    </location>
    <ligand>
        <name>Mg(2+)</name>
        <dbReference type="ChEBI" id="CHEBI:18420"/>
    </ligand>
</feature>
<feature type="binding site" evidence="1">
    <location>
        <position position="17"/>
    </location>
    <ligand>
        <name>ATP</name>
        <dbReference type="ChEBI" id="CHEBI:30616"/>
    </ligand>
</feature>
<feature type="binding site" evidence="1">
    <location>
        <position position="87"/>
    </location>
    <ligand>
        <name>substrate</name>
    </ligand>
</feature>
<feature type="binding site" evidence="1">
    <location>
        <begin position="204"/>
        <end position="208"/>
    </location>
    <ligand>
        <name>ATP</name>
        <dbReference type="ChEBI" id="CHEBI:30616"/>
    </ligand>
</feature>
<feature type="binding site" evidence="1">
    <location>
        <begin position="279"/>
        <end position="281"/>
    </location>
    <ligand>
        <name>ATP</name>
        <dbReference type="ChEBI" id="CHEBI:30616"/>
    </ligand>
</feature>
<feature type="binding site" evidence="1">
    <location>
        <begin position="327"/>
        <end position="331"/>
    </location>
    <ligand>
        <name>ATP</name>
        <dbReference type="ChEBI" id="CHEBI:30616"/>
    </ligand>
</feature>
<feature type="binding site" evidence="1">
    <location>
        <position position="381"/>
    </location>
    <ligand>
        <name>Mg(2+)</name>
        <dbReference type="ChEBI" id="CHEBI:18420"/>
    </ligand>
</feature>
<feature type="site" description="Transition state stabilizer" evidence="1">
    <location>
        <position position="176"/>
    </location>
</feature>
<feature type="site" description="Transition state stabilizer" evidence="1">
    <location>
        <position position="237"/>
    </location>
</feature>
<evidence type="ECO:0000255" key="1">
    <source>
        <dbReference type="HAMAP-Rule" id="MF_00020"/>
    </source>
</evidence>
<protein>
    <recommendedName>
        <fullName evidence="1">Acetate kinase</fullName>
        <ecNumber evidence="1">2.7.2.1</ecNumber>
    </recommendedName>
    <alternativeName>
        <fullName evidence="1">Acetokinase</fullName>
    </alternativeName>
</protein>
<name>ACKA_PSEA8</name>